<name>FB19_ARATH</name>
<dbReference type="EMBL" id="AC073506">
    <property type="protein sequence ID" value="AAG50568.1"/>
    <property type="molecule type" value="Genomic_DNA"/>
</dbReference>
<dbReference type="EMBL" id="AC074176">
    <property type="protein sequence ID" value="AAG50853.1"/>
    <property type="molecule type" value="Genomic_DNA"/>
</dbReference>
<dbReference type="EMBL" id="CP002684">
    <property type="protein sequence ID" value="AEE31190.1"/>
    <property type="molecule type" value="Genomic_DNA"/>
</dbReference>
<dbReference type="EMBL" id="CP002684">
    <property type="protein sequence ID" value="AEE31191.1"/>
    <property type="molecule type" value="Genomic_DNA"/>
</dbReference>
<dbReference type="EMBL" id="AY037238">
    <property type="protein sequence ID" value="AAK59838.1"/>
    <property type="molecule type" value="mRNA"/>
</dbReference>
<dbReference type="EMBL" id="AY058867">
    <property type="protein sequence ID" value="AAL24254.1"/>
    <property type="molecule type" value="mRNA"/>
</dbReference>
<dbReference type="EMBL" id="BT000503">
    <property type="protein sequence ID" value="AAN18072.1"/>
    <property type="molecule type" value="mRNA"/>
</dbReference>
<dbReference type="PIR" id="B86426">
    <property type="entry name" value="B86426"/>
</dbReference>
<dbReference type="RefSeq" id="NP_564350.1">
    <property type="nucleotide sequence ID" value="NM_102759.4"/>
</dbReference>
<dbReference type="RefSeq" id="NP_973940.1">
    <property type="nucleotide sequence ID" value="NM_202211.3"/>
</dbReference>
<dbReference type="BioGRID" id="25135">
    <property type="interactions" value="1"/>
</dbReference>
<dbReference type="FunCoup" id="Q9C534">
    <property type="interactions" value="89"/>
</dbReference>
<dbReference type="IntAct" id="Q9C534">
    <property type="interactions" value="1"/>
</dbReference>
<dbReference type="STRING" id="3702.Q9C534"/>
<dbReference type="PaxDb" id="3702-AT1G30200.2"/>
<dbReference type="ProteomicsDB" id="230794"/>
<dbReference type="EnsemblPlants" id="AT1G30200.1">
    <property type="protein sequence ID" value="AT1G30200.1"/>
    <property type="gene ID" value="AT1G30200"/>
</dbReference>
<dbReference type="EnsemblPlants" id="AT1G30200.2">
    <property type="protein sequence ID" value="AT1G30200.2"/>
    <property type="gene ID" value="AT1G30200"/>
</dbReference>
<dbReference type="GeneID" id="839900"/>
<dbReference type="Gramene" id="AT1G30200.1">
    <property type="protein sequence ID" value="AT1G30200.1"/>
    <property type="gene ID" value="AT1G30200"/>
</dbReference>
<dbReference type="Gramene" id="AT1G30200.2">
    <property type="protein sequence ID" value="AT1G30200.2"/>
    <property type="gene ID" value="AT1G30200"/>
</dbReference>
<dbReference type="KEGG" id="ath:AT1G30200"/>
<dbReference type="Araport" id="AT1G30200"/>
<dbReference type="TAIR" id="AT1G30200"/>
<dbReference type="eggNOG" id="ENOG502QTRT">
    <property type="taxonomic scope" value="Eukaryota"/>
</dbReference>
<dbReference type="HOGENOM" id="CLU_049279_2_0_1"/>
<dbReference type="InParanoid" id="Q9C534"/>
<dbReference type="OMA" id="EIGVTHH"/>
<dbReference type="PhylomeDB" id="Q9C534"/>
<dbReference type="PRO" id="PR:Q9C534"/>
<dbReference type="Proteomes" id="UP000006548">
    <property type="component" value="Chromosome 1"/>
</dbReference>
<dbReference type="ExpressionAtlas" id="Q9C534">
    <property type="expression patterns" value="baseline and differential"/>
</dbReference>
<dbReference type="Gene3D" id="1.20.1280.50">
    <property type="match status" value="1"/>
</dbReference>
<dbReference type="InterPro" id="IPR044809">
    <property type="entry name" value="AUF1-like"/>
</dbReference>
<dbReference type="InterPro" id="IPR036047">
    <property type="entry name" value="F-box-like_dom_sf"/>
</dbReference>
<dbReference type="InterPro" id="IPR001810">
    <property type="entry name" value="F-box_dom"/>
</dbReference>
<dbReference type="PANTHER" id="PTHR31215">
    <property type="entry name" value="OS05G0510400 PROTEIN-RELATED"/>
    <property type="match status" value="1"/>
</dbReference>
<dbReference type="Pfam" id="PF12937">
    <property type="entry name" value="F-box-like"/>
    <property type="match status" value="1"/>
</dbReference>
<dbReference type="SUPFAM" id="SSF81383">
    <property type="entry name" value="F-box domain"/>
    <property type="match status" value="1"/>
</dbReference>
<organism>
    <name type="scientific">Arabidopsis thaliana</name>
    <name type="common">Mouse-ear cress</name>
    <dbReference type="NCBI Taxonomy" id="3702"/>
    <lineage>
        <taxon>Eukaryota</taxon>
        <taxon>Viridiplantae</taxon>
        <taxon>Streptophyta</taxon>
        <taxon>Embryophyta</taxon>
        <taxon>Tracheophyta</taxon>
        <taxon>Spermatophyta</taxon>
        <taxon>Magnoliopsida</taxon>
        <taxon>eudicotyledons</taxon>
        <taxon>Gunneridae</taxon>
        <taxon>Pentapetalae</taxon>
        <taxon>rosids</taxon>
        <taxon>malvids</taxon>
        <taxon>Brassicales</taxon>
        <taxon>Brassicaceae</taxon>
        <taxon>Camelineae</taxon>
        <taxon>Arabidopsis</taxon>
    </lineage>
</organism>
<feature type="chain" id="PRO_0000283297" description="F-box protein At1g30200">
    <location>
        <begin position="1"/>
        <end position="379"/>
    </location>
</feature>
<feature type="domain" description="F-box">
    <location>
        <begin position="24"/>
        <end position="72"/>
    </location>
</feature>
<protein>
    <recommendedName>
        <fullName>F-box protein At1g30200</fullName>
    </recommendedName>
</protein>
<gene>
    <name type="ordered locus">At1g30200</name>
    <name type="ORF">F12P21.1</name>
    <name type="ORF">T2H7.1</name>
</gene>
<sequence length="379" mass="41842">MSYLLRSDPVSRIHPEPQSLTSFDHFDLLPDSLLLLIFDKVADVKDLGRCCIVSRRFHSLVPFVENVLVRVDCVISDDDSSSSDENHRFSLNTASISDAGGAGGSFSALFRLVFAPIFKPFQMLGQILGPKRSSSSFDASFSAINDEIGVTHHSPTQVLKNFGEIRFLKIELPTGELGIEDGILLKWRADFGSTLDNCMILGASSVIQSNSVKNHENSVDEDNGNIPESFYTNGGLKLRVVWTISSLIAASARHYLLQPIINEHKSLDRLVLSDADGQGVLCMNREQLEELRVTPLSASSASKRTLVPALNMRLWYAPELDLPDGTVLKGATLVAIRPSESKKEVCDASWLSDAFEEPFGTVAKMLIKRRTYCLEMNSF</sequence>
<accession>Q9C534</accession>
<proteinExistence type="evidence at transcript level"/>
<keyword id="KW-1185">Reference proteome</keyword>
<reference key="1">
    <citation type="journal article" date="2000" name="Nature">
        <title>Sequence and analysis of chromosome 1 of the plant Arabidopsis thaliana.</title>
        <authorList>
            <person name="Theologis A."/>
            <person name="Ecker J.R."/>
            <person name="Palm C.J."/>
            <person name="Federspiel N.A."/>
            <person name="Kaul S."/>
            <person name="White O."/>
            <person name="Alonso J."/>
            <person name="Altafi H."/>
            <person name="Araujo R."/>
            <person name="Bowman C.L."/>
            <person name="Brooks S.Y."/>
            <person name="Buehler E."/>
            <person name="Chan A."/>
            <person name="Chao Q."/>
            <person name="Chen H."/>
            <person name="Cheuk R.F."/>
            <person name="Chin C.W."/>
            <person name="Chung M.K."/>
            <person name="Conn L."/>
            <person name="Conway A.B."/>
            <person name="Conway A.R."/>
            <person name="Creasy T.H."/>
            <person name="Dewar K."/>
            <person name="Dunn P."/>
            <person name="Etgu P."/>
            <person name="Feldblyum T.V."/>
            <person name="Feng J.-D."/>
            <person name="Fong B."/>
            <person name="Fujii C.Y."/>
            <person name="Gill J.E."/>
            <person name="Goldsmith A.D."/>
            <person name="Haas B."/>
            <person name="Hansen N.F."/>
            <person name="Hughes B."/>
            <person name="Huizar L."/>
            <person name="Hunter J.L."/>
            <person name="Jenkins J."/>
            <person name="Johnson-Hopson C."/>
            <person name="Khan S."/>
            <person name="Khaykin E."/>
            <person name="Kim C.J."/>
            <person name="Koo H.L."/>
            <person name="Kremenetskaia I."/>
            <person name="Kurtz D.B."/>
            <person name="Kwan A."/>
            <person name="Lam B."/>
            <person name="Langin-Hooper S."/>
            <person name="Lee A."/>
            <person name="Lee J.M."/>
            <person name="Lenz C.A."/>
            <person name="Li J.H."/>
            <person name="Li Y.-P."/>
            <person name="Lin X."/>
            <person name="Liu S.X."/>
            <person name="Liu Z.A."/>
            <person name="Luros J.S."/>
            <person name="Maiti R."/>
            <person name="Marziali A."/>
            <person name="Militscher J."/>
            <person name="Miranda M."/>
            <person name="Nguyen M."/>
            <person name="Nierman W.C."/>
            <person name="Osborne B.I."/>
            <person name="Pai G."/>
            <person name="Peterson J."/>
            <person name="Pham P.K."/>
            <person name="Rizzo M."/>
            <person name="Rooney T."/>
            <person name="Rowley D."/>
            <person name="Sakano H."/>
            <person name="Salzberg S.L."/>
            <person name="Schwartz J.R."/>
            <person name="Shinn P."/>
            <person name="Southwick A.M."/>
            <person name="Sun H."/>
            <person name="Tallon L.J."/>
            <person name="Tambunga G."/>
            <person name="Toriumi M.J."/>
            <person name="Town C.D."/>
            <person name="Utterback T."/>
            <person name="Van Aken S."/>
            <person name="Vaysberg M."/>
            <person name="Vysotskaia V.S."/>
            <person name="Walker M."/>
            <person name="Wu D."/>
            <person name="Yu G."/>
            <person name="Fraser C.M."/>
            <person name="Venter J.C."/>
            <person name="Davis R.W."/>
        </authorList>
    </citation>
    <scope>NUCLEOTIDE SEQUENCE [LARGE SCALE GENOMIC DNA]</scope>
    <source>
        <strain>cv. Columbia</strain>
    </source>
</reference>
<reference key="2">
    <citation type="journal article" date="2017" name="Plant J.">
        <title>Araport11: a complete reannotation of the Arabidopsis thaliana reference genome.</title>
        <authorList>
            <person name="Cheng C.Y."/>
            <person name="Krishnakumar V."/>
            <person name="Chan A.P."/>
            <person name="Thibaud-Nissen F."/>
            <person name="Schobel S."/>
            <person name="Town C.D."/>
        </authorList>
    </citation>
    <scope>GENOME REANNOTATION</scope>
    <source>
        <strain>cv. Columbia</strain>
    </source>
</reference>
<reference key="3">
    <citation type="journal article" date="2003" name="Science">
        <title>Empirical analysis of transcriptional activity in the Arabidopsis genome.</title>
        <authorList>
            <person name="Yamada K."/>
            <person name="Lim J."/>
            <person name="Dale J.M."/>
            <person name="Chen H."/>
            <person name="Shinn P."/>
            <person name="Palm C.J."/>
            <person name="Southwick A.M."/>
            <person name="Wu H.C."/>
            <person name="Kim C.J."/>
            <person name="Nguyen M."/>
            <person name="Pham P.K."/>
            <person name="Cheuk R.F."/>
            <person name="Karlin-Newmann G."/>
            <person name="Liu S.X."/>
            <person name="Lam B."/>
            <person name="Sakano H."/>
            <person name="Wu T."/>
            <person name="Yu G."/>
            <person name="Miranda M."/>
            <person name="Quach H.L."/>
            <person name="Tripp M."/>
            <person name="Chang C.H."/>
            <person name="Lee J.M."/>
            <person name="Toriumi M.J."/>
            <person name="Chan M.M."/>
            <person name="Tang C.C."/>
            <person name="Onodera C.S."/>
            <person name="Deng J.M."/>
            <person name="Akiyama K."/>
            <person name="Ansari Y."/>
            <person name="Arakawa T."/>
            <person name="Banh J."/>
            <person name="Banno F."/>
            <person name="Bowser L."/>
            <person name="Brooks S.Y."/>
            <person name="Carninci P."/>
            <person name="Chao Q."/>
            <person name="Choy N."/>
            <person name="Enju A."/>
            <person name="Goldsmith A.D."/>
            <person name="Gurjal M."/>
            <person name="Hansen N.F."/>
            <person name="Hayashizaki Y."/>
            <person name="Johnson-Hopson C."/>
            <person name="Hsuan V.W."/>
            <person name="Iida K."/>
            <person name="Karnes M."/>
            <person name="Khan S."/>
            <person name="Koesema E."/>
            <person name="Ishida J."/>
            <person name="Jiang P.X."/>
            <person name="Jones T."/>
            <person name="Kawai J."/>
            <person name="Kamiya A."/>
            <person name="Meyers C."/>
            <person name="Nakajima M."/>
            <person name="Narusaka M."/>
            <person name="Seki M."/>
            <person name="Sakurai T."/>
            <person name="Satou M."/>
            <person name="Tamse R."/>
            <person name="Vaysberg M."/>
            <person name="Wallender E.K."/>
            <person name="Wong C."/>
            <person name="Yamamura Y."/>
            <person name="Yuan S."/>
            <person name="Shinozaki K."/>
            <person name="Davis R.W."/>
            <person name="Theologis A."/>
            <person name="Ecker J.R."/>
        </authorList>
    </citation>
    <scope>NUCLEOTIDE SEQUENCE [LARGE SCALE MRNA]</scope>
    <source>
        <strain>cv. Columbia</strain>
    </source>
</reference>